<name>NDHH_SYNY3</name>
<evidence type="ECO:0000269" key="1">
    <source>
    </source>
</evidence>
<evidence type="ECO:0000269" key="2">
    <source>
    </source>
</evidence>
<evidence type="ECO:0000305" key="3"/>
<evidence type="ECO:0000305" key="4">
    <source>
    </source>
</evidence>
<gene>
    <name type="primary">ndhH</name>
    <name type="ordered locus">slr0261</name>
</gene>
<protein>
    <recommendedName>
        <fullName>NAD(P)H-quinone oxidoreductase subunit H</fullName>
        <ecNumber>7.1.1.-</ecNumber>
    </recommendedName>
    <alternativeName>
        <fullName>NAD(P)H dehydrogenase subunit H</fullName>
    </alternativeName>
    <alternativeName>
        <fullName>NADH-plastoquinone oxidoreductase subunit H</fullName>
    </alternativeName>
    <alternativeName>
        <fullName>NDH-1 subunit H</fullName>
        <shortName>NDH-H</shortName>
    </alternativeName>
</protein>
<proteinExistence type="evidence at protein level"/>
<accession>P27724</accession>
<organism>
    <name type="scientific">Synechocystis sp. (strain ATCC 27184 / PCC 6803 / Kazusa)</name>
    <dbReference type="NCBI Taxonomy" id="1111708"/>
    <lineage>
        <taxon>Bacteria</taxon>
        <taxon>Bacillati</taxon>
        <taxon>Cyanobacteriota</taxon>
        <taxon>Cyanophyceae</taxon>
        <taxon>Synechococcales</taxon>
        <taxon>Merismopediaceae</taxon>
        <taxon>Synechocystis</taxon>
    </lineage>
</organism>
<comment type="function">
    <text>NDH-1 shuttles electrons from an unknown electron donor, via FMN and iron-sulfur (Fe-S) centers, to quinones in the respiratory and/or the photosynthetic chain. The immediate electron acceptor for the enzyme in this species is believed to be plastoquinone. Couples the redox reaction to proton translocation, and thus conserves the redox energy in a proton gradient. Cyanobacterial NDH-1 also plays a role in inorganic carbon-concentration.</text>
</comment>
<comment type="catalytic activity">
    <reaction>
        <text>a plastoquinone + NADH + (n+1) H(+)(in) = a plastoquinol + NAD(+) + n H(+)(out)</text>
        <dbReference type="Rhea" id="RHEA:42608"/>
        <dbReference type="Rhea" id="RHEA-COMP:9561"/>
        <dbReference type="Rhea" id="RHEA-COMP:9562"/>
        <dbReference type="ChEBI" id="CHEBI:15378"/>
        <dbReference type="ChEBI" id="CHEBI:17757"/>
        <dbReference type="ChEBI" id="CHEBI:57540"/>
        <dbReference type="ChEBI" id="CHEBI:57945"/>
        <dbReference type="ChEBI" id="CHEBI:62192"/>
    </reaction>
</comment>
<comment type="catalytic activity">
    <reaction>
        <text>a plastoquinone + NADPH + (n+1) H(+)(in) = a plastoquinol + NADP(+) + n H(+)(out)</text>
        <dbReference type="Rhea" id="RHEA:42612"/>
        <dbReference type="Rhea" id="RHEA-COMP:9561"/>
        <dbReference type="Rhea" id="RHEA-COMP:9562"/>
        <dbReference type="ChEBI" id="CHEBI:15378"/>
        <dbReference type="ChEBI" id="CHEBI:17757"/>
        <dbReference type="ChEBI" id="CHEBI:57783"/>
        <dbReference type="ChEBI" id="CHEBI:58349"/>
        <dbReference type="ChEBI" id="CHEBI:62192"/>
    </reaction>
</comment>
<comment type="subunit">
    <text>NDH-1 can be composed of about 15 different subunits; different subcomplexes with different compositions have been identified which probably have different functions.</text>
</comment>
<comment type="subcellular location">
    <subcellularLocation>
        <location evidence="4">Cellular thylakoid membrane</location>
        <topology evidence="4">Peripheral membrane protein</topology>
        <orientation evidence="4">Cytoplasmic side</orientation>
    </subcellularLocation>
</comment>
<comment type="PTM">
    <text evidence="1">The initiator methionine has been seen to be kept and removed.</text>
</comment>
<comment type="similarity">
    <text evidence="3">Belongs to the complex I 49 kDa subunit family.</text>
</comment>
<feature type="initiator methionine" description="Removed; partial" evidence="1 2">
    <location>
        <position position="1"/>
    </location>
</feature>
<feature type="chain" id="PRO_0000118615" description="NAD(P)H-quinone oxidoreductase subunit H">
    <location>
        <begin position="2"/>
        <end position="394"/>
    </location>
</feature>
<reference key="1">
    <citation type="journal article" date="1992" name="Plant Mol. Biol.">
        <title>Nucleotide sequence and expression of the ndhH gene of the cyanobacterium Synechocystis sp. PCC6803.</title>
        <authorList>
            <person name="Steinmueller K."/>
        </authorList>
    </citation>
    <scope>NUCLEOTIDE SEQUENCE [GENOMIC DNA]</scope>
</reference>
<reference key="2">
    <citation type="journal article" date="1996" name="DNA Res.">
        <title>Sequence analysis of the genome of the unicellular cyanobacterium Synechocystis sp. strain PCC6803. II. Sequence determination of the entire genome and assignment of potential protein-coding regions.</title>
        <authorList>
            <person name="Kaneko T."/>
            <person name="Sato S."/>
            <person name="Kotani H."/>
            <person name="Tanaka A."/>
            <person name="Asamizu E."/>
            <person name="Nakamura Y."/>
            <person name="Miyajima N."/>
            <person name="Hirosawa M."/>
            <person name="Sugiura M."/>
            <person name="Sasamoto S."/>
            <person name="Kimura T."/>
            <person name="Hosouchi T."/>
            <person name="Matsuno A."/>
            <person name="Muraki A."/>
            <person name="Nakazaki N."/>
            <person name="Naruo K."/>
            <person name="Okumura S."/>
            <person name="Shimpo S."/>
            <person name="Takeuchi C."/>
            <person name="Wada T."/>
            <person name="Watanabe A."/>
            <person name="Yamada M."/>
            <person name="Yasuda M."/>
            <person name="Tabata S."/>
        </authorList>
    </citation>
    <scope>NUCLEOTIDE SEQUENCE [LARGE SCALE GENOMIC DNA]</scope>
    <source>
        <strain>ATCC 27184 / PCC 6803 / Kazusa</strain>
    </source>
</reference>
<reference key="3">
    <citation type="journal article" date="1993" name="FEBS Lett.">
        <title>Immunopurification of a subcomplex of the NAD(P)H-plastoquinone-oxidoreductase from the cyanobacterium Synechocystis sp. PCC6803.</title>
        <authorList>
            <person name="Berger S."/>
            <person name="Ellersiek U."/>
            <person name="Kinzelt D."/>
            <person name="Steinmueller K."/>
        </authorList>
    </citation>
    <scope>PROTEIN SEQUENCE OF 2-18</scope>
</reference>
<reference key="4">
    <citation type="journal article" date="2004" name="J. Biol. Chem.">
        <title>Subunit composition of NDH-1 complexes of Synechocystis sp. PCC 6803: identification of two new ndh gene products with nuclear-encoded homologues in the chloroplast Ndh complex.</title>
        <authorList>
            <person name="Prommeenate P."/>
            <person name="Lennon A.M."/>
            <person name="Markert C."/>
            <person name="Hippler M."/>
            <person name="Nixon P.J."/>
        </authorList>
    </citation>
    <scope>PROTEIN SEQUENCE OF 2-9</scope>
    <scope>CHARACTERIZATION AS A MEMBER OF THE NAD(P)H-QUINONE OXIDOREDUCTASE COMPLEX</scope>
    <scope>SUBCOMPLEXES OF NDH-1</scope>
</reference>
<reference key="5">
    <citation type="journal article" date="2005" name="J. Biol. Chem.">
        <title>Identification of NdhL and Ssl1690 (NdhO) in NDH-1L and NDH-1M complexes of Synechocystis sp. PCC 6803.</title>
        <authorList>
            <person name="Battchikova N."/>
            <person name="Zhang P."/>
            <person name="Rudd S."/>
            <person name="Ogawa T."/>
            <person name="Aro E.-M."/>
        </authorList>
    </citation>
    <scope>PROTEIN SEQUENCE OF 59-69; 89-96; 103-110; 153-175; 193-201; 204-210; 213-226; 282-294 AND 322-320</scope>
    <scope>SUBCOMPLEXES OF NDH-1</scope>
</reference>
<reference key="6">
    <citation type="journal article" date="2005" name="Proteomics">
        <title>Proteomic studies of the thylakoid membrane of Synechocystis sp. PCC 6803.</title>
        <authorList>
            <person name="Srivastava R."/>
            <person name="Pisareva T."/>
            <person name="Norling B."/>
        </authorList>
    </citation>
    <scope>SUBCELLULAR LOCATION IN THYLAKOID</scope>
</reference>
<dbReference type="EC" id="7.1.1.-"/>
<dbReference type="EMBL" id="X60650">
    <property type="protein sequence ID" value="CAA43057.1"/>
    <property type="molecule type" value="Genomic_DNA"/>
</dbReference>
<dbReference type="EMBL" id="BA000022">
    <property type="protein sequence ID" value="BAA17939.1"/>
    <property type="molecule type" value="Genomic_DNA"/>
</dbReference>
<dbReference type="PIR" id="S19118">
    <property type="entry name" value="QXYBNH"/>
</dbReference>
<dbReference type="SMR" id="P27724"/>
<dbReference type="IntAct" id="P27724">
    <property type="interactions" value="14"/>
</dbReference>
<dbReference type="STRING" id="1148.gene:10498808"/>
<dbReference type="PaxDb" id="1148-1653022"/>
<dbReference type="EnsemblBacteria" id="BAA17939">
    <property type="protein sequence ID" value="BAA17939"/>
    <property type="gene ID" value="BAA17939"/>
</dbReference>
<dbReference type="KEGG" id="syn:slr0261"/>
<dbReference type="eggNOG" id="COG0649">
    <property type="taxonomic scope" value="Bacteria"/>
</dbReference>
<dbReference type="InParanoid" id="P27724"/>
<dbReference type="PhylomeDB" id="P27724"/>
<dbReference type="Proteomes" id="UP000001425">
    <property type="component" value="Chromosome"/>
</dbReference>
<dbReference type="GO" id="GO:0031676">
    <property type="term" value="C:plasma membrane-derived thylakoid membrane"/>
    <property type="evidence" value="ECO:0007669"/>
    <property type="project" value="UniProtKB-SubCell"/>
</dbReference>
<dbReference type="GO" id="GO:0051287">
    <property type="term" value="F:NAD binding"/>
    <property type="evidence" value="ECO:0007669"/>
    <property type="project" value="InterPro"/>
</dbReference>
<dbReference type="GO" id="GO:0016655">
    <property type="term" value="F:oxidoreductase activity, acting on NAD(P)H, quinone or similar compound as acceptor"/>
    <property type="evidence" value="ECO:0007669"/>
    <property type="project" value="UniProtKB-UniRule"/>
</dbReference>
<dbReference type="GO" id="GO:0048038">
    <property type="term" value="F:quinone binding"/>
    <property type="evidence" value="ECO:0007669"/>
    <property type="project" value="UniProtKB-KW"/>
</dbReference>
<dbReference type="GO" id="GO:0019684">
    <property type="term" value="P:photosynthesis, light reaction"/>
    <property type="evidence" value="ECO:0007669"/>
    <property type="project" value="UniProtKB-UniRule"/>
</dbReference>
<dbReference type="Gene3D" id="1.10.645.10">
    <property type="entry name" value="Cytochrome-c3 Hydrogenase, chain B"/>
    <property type="match status" value="1"/>
</dbReference>
<dbReference type="HAMAP" id="MF_01358">
    <property type="entry name" value="NDH1_NuoD"/>
    <property type="match status" value="1"/>
</dbReference>
<dbReference type="InterPro" id="IPR001135">
    <property type="entry name" value="NADH_Q_OxRdtase_suD"/>
</dbReference>
<dbReference type="InterPro" id="IPR014029">
    <property type="entry name" value="NADH_UbQ_OxRdtase_49kDa_CS"/>
</dbReference>
<dbReference type="InterPro" id="IPR022885">
    <property type="entry name" value="NDH1_su_D/H"/>
</dbReference>
<dbReference type="InterPro" id="IPR029014">
    <property type="entry name" value="NiFe-Hase_large"/>
</dbReference>
<dbReference type="NCBIfam" id="TIGR01962">
    <property type="entry name" value="NuoD"/>
    <property type="match status" value="1"/>
</dbReference>
<dbReference type="NCBIfam" id="NF004739">
    <property type="entry name" value="PRK06075.1"/>
    <property type="match status" value="1"/>
</dbReference>
<dbReference type="NCBIfam" id="NF005649">
    <property type="entry name" value="PRK07415.1"/>
    <property type="match status" value="1"/>
</dbReference>
<dbReference type="PANTHER" id="PTHR11993:SF10">
    <property type="entry name" value="NADH DEHYDROGENASE [UBIQUINONE] IRON-SULFUR PROTEIN 2, MITOCHONDRIAL"/>
    <property type="match status" value="1"/>
</dbReference>
<dbReference type="PANTHER" id="PTHR11993">
    <property type="entry name" value="NADH-UBIQUINONE OXIDOREDUCTASE 49 KDA SUBUNIT"/>
    <property type="match status" value="1"/>
</dbReference>
<dbReference type="Pfam" id="PF00346">
    <property type="entry name" value="Complex1_49kDa"/>
    <property type="match status" value="1"/>
</dbReference>
<dbReference type="SUPFAM" id="SSF56762">
    <property type="entry name" value="HydB/Nqo4-like"/>
    <property type="match status" value="1"/>
</dbReference>
<dbReference type="PROSITE" id="PS00535">
    <property type="entry name" value="COMPLEX1_49K"/>
    <property type="match status" value="1"/>
</dbReference>
<keyword id="KW-0903">Direct protein sequencing</keyword>
<keyword id="KW-0472">Membrane</keyword>
<keyword id="KW-0520">NAD</keyword>
<keyword id="KW-0521">NADP</keyword>
<keyword id="KW-0618">Plastoquinone</keyword>
<keyword id="KW-0874">Quinone</keyword>
<keyword id="KW-1185">Reference proteome</keyword>
<keyword id="KW-0793">Thylakoid</keyword>
<keyword id="KW-1278">Translocase</keyword>
<keyword id="KW-0813">Transport</keyword>
<sequence length="394" mass="45534">MTKIETRTEPMVLNMGPHHPSMHGVLRLIVTLDGEDVVDCEPVIGYLHRGMEKIAESRTNIMYVPYVSRWDYAAGMFNEAITVNAPEKLADIEVPKRAQYIRVIMLELNRIANHLLWLGPFMADVGAQTPFFYIFREREMIYDLWEAASGMRLINNNYFRVGGVAVDLPYGWNDKCEDFCDYFLPKVDEYEKLITNNPIFRRRVEGVGTVTREEAINWGLSGPMLRGSGVKWDLRKVDHYECYDELDWEVQYETAGDCFARYLVRIREMRESVKIIRQALKAMPGGPYENLEAKRLQEGKKSEWNDFQYQYIAKKVAPTFKIPAGEHYVRLESGKGELGIFIQGNDDVFPWRWKIRSADFNNLQILPHILKGVKVADIMAILGSIDIIMGSVDR</sequence>